<protein>
    <recommendedName>
        <fullName evidence="2">Calaxin</fullName>
    </recommendedName>
    <alternativeName>
        <fullName>EF-hand calcium-binding domain-containing protein 1</fullName>
    </alternativeName>
</protein>
<name>CLXN_BOVIN</name>
<proteinExistence type="evidence at protein level"/>
<dbReference type="EMBL" id="BC109799">
    <property type="protein sequence ID" value="AAI09800.1"/>
    <property type="molecule type" value="mRNA"/>
</dbReference>
<dbReference type="RefSeq" id="NP_001032674.1">
    <property type="nucleotide sequence ID" value="NM_001037585.2"/>
</dbReference>
<dbReference type="RefSeq" id="XP_024857215.1">
    <property type="nucleotide sequence ID" value="XM_025001447.2"/>
</dbReference>
<dbReference type="RefSeq" id="XP_024857216.1">
    <property type="nucleotide sequence ID" value="XM_025001448.2"/>
</dbReference>
<dbReference type="PDB" id="7RRO">
    <property type="method" value="EM"/>
    <property type="resolution" value="3.40 A"/>
    <property type="chains" value="I3/I4=1-212"/>
</dbReference>
<dbReference type="PDB" id="9CPB">
    <property type="method" value="EM"/>
    <property type="resolution" value="3.52 A"/>
    <property type="chains" value="3F=1-212"/>
</dbReference>
<dbReference type="PDBsum" id="7RRO"/>
<dbReference type="PDBsum" id="9CPB"/>
<dbReference type="EMDB" id="EMD-24664"/>
<dbReference type="EMDB" id="EMD-45801"/>
<dbReference type="EMDB" id="EMD-50664"/>
<dbReference type="SMR" id="Q32L26"/>
<dbReference type="FunCoup" id="Q32L26">
    <property type="interactions" value="133"/>
</dbReference>
<dbReference type="STRING" id="9913.ENSBTAP00000073883"/>
<dbReference type="PaxDb" id="9913-ENSBTAP00000011457"/>
<dbReference type="Ensembl" id="ENSBTAT00000011457.4">
    <property type="protein sequence ID" value="ENSBTAP00000011457.2"/>
    <property type="gene ID" value="ENSBTAG00000008693.5"/>
</dbReference>
<dbReference type="GeneID" id="505272"/>
<dbReference type="KEGG" id="bta:505272"/>
<dbReference type="CTD" id="79645"/>
<dbReference type="VEuPathDB" id="HostDB:ENSBTAG00000008693"/>
<dbReference type="VGNC" id="VGNC:28339">
    <property type="gene designation" value="CLXN"/>
</dbReference>
<dbReference type="eggNOG" id="KOG0044">
    <property type="taxonomic scope" value="Eukaryota"/>
</dbReference>
<dbReference type="GeneTree" id="ENSGT00940000159968"/>
<dbReference type="HOGENOM" id="CLU_061288_3_2_1"/>
<dbReference type="InParanoid" id="Q32L26"/>
<dbReference type="OMA" id="DNDGCVS"/>
<dbReference type="OrthoDB" id="191686at2759"/>
<dbReference type="TreeFam" id="TF323358"/>
<dbReference type="Proteomes" id="UP000009136">
    <property type="component" value="Chromosome 14"/>
</dbReference>
<dbReference type="Bgee" id="ENSBTAG00000008693">
    <property type="expression patterns" value="Expressed in olfactory segment of nasal mucosa and 67 other cell types or tissues"/>
</dbReference>
<dbReference type="GO" id="GO:0005929">
    <property type="term" value="C:cilium"/>
    <property type="evidence" value="ECO:0000250"/>
    <property type="project" value="UniProtKB"/>
</dbReference>
<dbReference type="GO" id="GO:0120228">
    <property type="term" value="C:outer dynein arm docking complex"/>
    <property type="evidence" value="ECO:0000250"/>
    <property type="project" value="UniProtKB"/>
</dbReference>
<dbReference type="GO" id="GO:0036126">
    <property type="term" value="C:sperm flagellum"/>
    <property type="evidence" value="ECO:0000250"/>
    <property type="project" value="UniProtKB"/>
</dbReference>
<dbReference type="GO" id="GO:0005509">
    <property type="term" value="F:calcium ion binding"/>
    <property type="evidence" value="ECO:0000318"/>
    <property type="project" value="GO_Central"/>
</dbReference>
<dbReference type="GO" id="GO:0003341">
    <property type="term" value="P:cilium movement"/>
    <property type="evidence" value="ECO:0000314"/>
    <property type="project" value="UniProtKB"/>
</dbReference>
<dbReference type="GO" id="GO:0036158">
    <property type="term" value="P:outer dynein arm assembly"/>
    <property type="evidence" value="ECO:0000314"/>
    <property type="project" value="UniProtKB"/>
</dbReference>
<dbReference type="GO" id="GO:0003352">
    <property type="term" value="P:regulation of cilium movement"/>
    <property type="evidence" value="ECO:0000250"/>
    <property type="project" value="UniProtKB"/>
</dbReference>
<dbReference type="GO" id="GO:1901317">
    <property type="term" value="P:regulation of flagellated sperm motility"/>
    <property type="evidence" value="ECO:0000250"/>
    <property type="project" value="UniProtKB"/>
</dbReference>
<dbReference type="GO" id="GO:0009966">
    <property type="term" value="P:regulation of signal transduction"/>
    <property type="evidence" value="ECO:0000318"/>
    <property type="project" value="GO_Central"/>
</dbReference>
<dbReference type="CDD" id="cd00051">
    <property type="entry name" value="EFh"/>
    <property type="match status" value="2"/>
</dbReference>
<dbReference type="Gene3D" id="1.10.238.10">
    <property type="entry name" value="EF-hand"/>
    <property type="match status" value="1"/>
</dbReference>
<dbReference type="InterPro" id="IPR011992">
    <property type="entry name" value="EF-hand-dom_pair"/>
</dbReference>
<dbReference type="InterPro" id="IPR018247">
    <property type="entry name" value="EF_Hand_1_Ca_BS"/>
</dbReference>
<dbReference type="InterPro" id="IPR002048">
    <property type="entry name" value="EF_hand_dom"/>
</dbReference>
<dbReference type="InterPro" id="IPR028846">
    <property type="entry name" value="Recoverin"/>
</dbReference>
<dbReference type="PANTHER" id="PTHR23055:SF75">
    <property type="entry name" value="CALAXIN"/>
    <property type="match status" value="1"/>
</dbReference>
<dbReference type="PANTHER" id="PTHR23055">
    <property type="entry name" value="CALCIUM BINDING PROTEINS"/>
    <property type="match status" value="1"/>
</dbReference>
<dbReference type="Pfam" id="PF13202">
    <property type="entry name" value="EF-hand_5"/>
    <property type="match status" value="1"/>
</dbReference>
<dbReference type="Pfam" id="PF13499">
    <property type="entry name" value="EF-hand_7"/>
    <property type="match status" value="1"/>
</dbReference>
<dbReference type="SMART" id="SM00054">
    <property type="entry name" value="EFh"/>
    <property type="match status" value="3"/>
</dbReference>
<dbReference type="SUPFAM" id="SSF47473">
    <property type="entry name" value="EF-hand"/>
    <property type="match status" value="1"/>
</dbReference>
<dbReference type="PROSITE" id="PS00018">
    <property type="entry name" value="EF_HAND_1"/>
    <property type="match status" value="2"/>
</dbReference>
<dbReference type="PROSITE" id="PS50222">
    <property type="entry name" value="EF_HAND_2"/>
    <property type="match status" value="3"/>
</dbReference>
<accession>Q32L26</accession>
<organism>
    <name type="scientific">Bos taurus</name>
    <name type="common">Bovine</name>
    <dbReference type="NCBI Taxonomy" id="9913"/>
    <lineage>
        <taxon>Eukaryota</taxon>
        <taxon>Metazoa</taxon>
        <taxon>Chordata</taxon>
        <taxon>Craniata</taxon>
        <taxon>Vertebrata</taxon>
        <taxon>Euteleostomi</taxon>
        <taxon>Mammalia</taxon>
        <taxon>Eutheria</taxon>
        <taxon>Laurasiatheria</taxon>
        <taxon>Artiodactyla</taxon>
        <taxon>Ruminantia</taxon>
        <taxon>Pecora</taxon>
        <taxon>Bovidae</taxon>
        <taxon>Bovinae</taxon>
        <taxon>Bos</taxon>
    </lineage>
</organism>
<comment type="function">
    <text evidence="2 5">Component of the outer dynein arm-docking complex (ODA-DC) that mediates outer dynein arms (ODA) binding onto the doublet microtubule. Seems to regulate the assembly of both ODAs and their axonemal docking complex onto ciliary microtubules (PubMed:34715025). Regulates ciliary and flagellar motility and is required for cilia-driven determination of body laterality (By similarity).</text>
</comment>
<comment type="subunit">
    <text evidence="5">Component of the outer dynein arm-docking complex along with ODAD1, ODAD2, ODAD3 and ODAD4.</text>
</comment>
<comment type="subcellular location">
    <subcellularLocation>
        <location evidence="1">Cytoplasm</location>
        <location evidence="1">Cytoskeleton</location>
        <location evidence="1">Cilium axoneme</location>
    </subcellularLocation>
    <subcellularLocation>
        <location evidence="3">Cell projection</location>
        <location evidence="3">Cilium</location>
    </subcellularLocation>
    <subcellularLocation>
        <location evidence="3">Cell projection</location>
        <location evidence="3">Cilium</location>
        <location evidence="3">Flagellum</location>
    </subcellularLocation>
</comment>
<comment type="tissue specificity">
    <text evidence="5">Expressed in trachea multiciliated cells.</text>
</comment>
<feature type="chain" id="PRO_0000251968" description="Calaxin">
    <location>
        <begin position="1"/>
        <end position="212"/>
    </location>
</feature>
<feature type="domain" description="EF-hand 1" evidence="4">
    <location>
        <begin position="65"/>
        <end position="100"/>
    </location>
</feature>
<feature type="domain" description="EF-hand 2" evidence="4">
    <location>
        <begin position="101"/>
        <end position="136"/>
    </location>
</feature>
<feature type="domain" description="EF-hand 3" evidence="4">
    <location>
        <begin position="146"/>
        <end position="181"/>
    </location>
</feature>
<feature type="binding site" evidence="4">
    <location>
        <position position="78"/>
    </location>
    <ligand>
        <name>Ca(2+)</name>
        <dbReference type="ChEBI" id="CHEBI:29108"/>
        <label>1</label>
    </ligand>
</feature>
<feature type="binding site" evidence="4">
    <location>
        <position position="80"/>
    </location>
    <ligand>
        <name>Ca(2+)</name>
        <dbReference type="ChEBI" id="CHEBI:29108"/>
        <label>1</label>
    </ligand>
</feature>
<feature type="binding site" evidence="4">
    <location>
        <position position="82"/>
    </location>
    <ligand>
        <name>Ca(2+)</name>
        <dbReference type="ChEBI" id="CHEBI:29108"/>
        <label>1</label>
    </ligand>
</feature>
<feature type="binding site" evidence="4">
    <location>
        <position position="84"/>
    </location>
    <ligand>
        <name>Ca(2+)</name>
        <dbReference type="ChEBI" id="CHEBI:29108"/>
        <label>1</label>
    </ligand>
</feature>
<feature type="binding site" evidence="4">
    <location>
        <position position="89"/>
    </location>
    <ligand>
        <name>Ca(2+)</name>
        <dbReference type="ChEBI" id="CHEBI:29108"/>
        <label>1</label>
    </ligand>
</feature>
<feature type="binding site" evidence="6">
    <location>
        <position position="114"/>
    </location>
    <ligand>
        <name>Ca(2+)</name>
        <dbReference type="ChEBI" id="CHEBI:29108"/>
        <label>2</label>
    </ligand>
</feature>
<feature type="binding site" evidence="6">
    <location>
        <position position="116"/>
    </location>
    <ligand>
        <name>Ca(2+)</name>
        <dbReference type="ChEBI" id="CHEBI:29108"/>
        <label>2</label>
    </ligand>
</feature>
<feature type="binding site" evidence="6">
    <location>
        <position position="118"/>
    </location>
    <ligand>
        <name>Ca(2+)</name>
        <dbReference type="ChEBI" id="CHEBI:29108"/>
        <label>2</label>
    </ligand>
</feature>
<feature type="binding site" evidence="6">
    <location>
        <position position="125"/>
    </location>
    <ligand>
        <name>Ca(2+)</name>
        <dbReference type="ChEBI" id="CHEBI:29108"/>
        <label>2</label>
    </ligand>
</feature>
<feature type="binding site" evidence="4">
    <location>
        <position position="159"/>
    </location>
    <ligand>
        <name>Ca(2+)</name>
        <dbReference type="ChEBI" id="CHEBI:29108"/>
        <label>3</label>
    </ligand>
</feature>
<feature type="binding site" evidence="4">
    <location>
        <position position="161"/>
    </location>
    <ligand>
        <name>Ca(2+)</name>
        <dbReference type="ChEBI" id="CHEBI:29108"/>
        <label>3</label>
    </ligand>
</feature>
<feature type="binding site" evidence="4">
    <location>
        <position position="163"/>
    </location>
    <ligand>
        <name>Ca(2+)</name>
        <dbReference type="ChEBI" id="CHEBI:29108"/>
        <label>3</label>
    </ligand>
</feature>
<feature type="binding site" evidence="4">
    <location>
        <position position="165"/>
    </location>
    <ligand>
        <name>Ca(2+)</name>
        <dbReference type="ChEBI" id="CHEBI:29108"/>
        <label>3</label>
    </ligand>
</feature>
<feature type="binding site">
    <location>
        <position position="170"/>
    </location>
    <ligand>
        <name>Ca(2+)</name>
        <dbReference type="ChEBI" id="CHEBI:29108"/>
        <label>3</label>
    </ligand>
</feature>
<gene>
    <name type="primary">CLXN</name>
    <name type="synonym">EFCAB1</name>
</gene>
<reference key="1">
    <citation type="submission" date="2005-11" db="EMBL/GenBank/DDBJ databases">
        <authorList>
            <consortium name="NIH - Mammalian Gene Collection (MGC) project"/>
        </authorList>
    </citation>
    <scope>NUCLEOTIDE SEQUENCE [LARGE SCALE MRNA]</scope>
    <source>
        <strain>Crossbred X Angus</strain>
        <tissue>Liver</tissue>
    </source>
</reference>
<reference evidence="7" key="2">
    <citation type="journal article" date="2021" name="Cell">
        <title>De novo identification of mammalian ciliary motility proteins using cryo-EM.</title>
        <authorList>
            <person name="Gui M."/>
            <person name="Farley H."/>
            <person name="Anujan P."/>
            <person name="Anderson J.R."/>
            <person name="Maxwell D.W."/>
            <person name="Whitchurch J.B."/>
            <person name="Botsch J.J."/>
            <person name="Qiu T."/>
            <person name="Meleppattu S."/>
            <person name="Singh S.K."/>
            <person name="Zhang Q."/>
            <person name="Thompson J."/>
            <person name="Lucas J.S."/>
            <person name="Bingle C.D."/>
            <person name="Norris D.P."/>
            <person name="Roy S."/>
            <person name="Brown A."/>
        </authorList>
    </citation>
    <scope>STRUCTURE BY ELECTRON MICROSCOPY (3.40 ANGSTROMS)</scope>
    <scope>SUBUNIT</scope>
    <scope>FUNCTION</scope>
    <scope>SUBCELLULAR LOCATION</scope>
    <scope>TISSUE SPECIFICITY</scope>
</reference>
<sequence length="212" mass="24635">MNRKKLQKLTDSLTKNCKHFSKFEVKCLINLFYNLVGEVTERQGVIIGLDRNAFRNILHMTFGMTDDMIMDRVFRGFDKDNDGCISVTEWVYGLSVFLRGTLEEKMKYCFEVFDLNGDSFISKEEMFHMLKNSLLKQPSEEDPDEGIKDLVEITLKKMDHDHDGKLSFADYEQAVREETLLLEAFGPCLPDPKSQSEFEAQVFKDPNEFNEV</sequence>
<evidence type="ECO:0000250" key="1">
    <source>
        <dbReference type="UniProtKB" id="Q96M63"/>
    </source>
</evidence>
<evidence type="ECO:0000250" key="2">
    <source>
        <dbReference type="UniProtKB" id="Q9D3N2"/>
    </source>
</evidence>
<evidence type="ECO:0000250" key="3">
    <source>
        <dbReference type="UniProtKB" id="Q9HAE3"/>
    </source>
</evidence>
<evidence type="ECO:0000255" key="4">
    <source>
        <dbReference type="PROSITE-ProRule" id="PRU00448"/>
    </source>
</evidence>
<evidence type="ECO:0000269" key="5">
    <source>
    </source>
</evidence>
<evidence type="ECO:0000305" key="6"/>
<evidence type="ECO:0007744" key="7">
    <source>
        <dbReference type="PDB" id="7RRO"/>
    </source>
</evidence>
<keyword id="KW-0002">3D-structure</keyword>
<keyword id="KW-0106">Calcium</keyword>
<keyword id="KW-0966">Cell projection</keyword>
<keyword id="KW-0969">Cilium</keyword>
<keyword id="KW-0963">Cytoplasm</keyword>
<keyword id="KW-0206">Cytoskeleton</keyword>
<keyword id="KW-0282">Flagellum</keyword>
<keyword id="KW-0479">Metal-binding</keyword>
<keyword id="KW-1185">Reference proteome</keyword>
<keyword id="KW-0677">Repeat</keyword>